<protein>
    <recommendedName>
        <fullName evidence="12">AP-4 complex subunit epsilon-1</fullName>
    </recommendedName>
    <alternativeName>
        <fullName>AP-4 adaptor complex subunit epsilon</fullName>
    </alternativeName>
    <alternativeName>
        <fullName>Adaptor-related protein complex 4 subunit epsilon-1</fullName>
    </alternativeName>
    <alternativeName>
        <fullName>Epsilon subunit of AP-4</fullName>
    </alternativeName>
    <alternativeName>
        <fullName>Epsilon-adaptin</fullName>
    </alternativeName>
</protein>
<comment type="function">
    <text evidence="2 3 13 14">Component of the adaptor protein complex 4 (AP-4). Adaptor protein complexes are vesicle coat components involved both in vesicle formation and cargo selection. They control the vesicular transport of proteins in different trafficking pathways (PubMed:10066790, PubMed:10436028). AP-4 forms a non clathrin-associated coat on vesicles departing the trans-Golgi network (TGN) and may be involved in the targeting of proteins from the trans-Golgi network (TGN) to the endosomal-lysosomal system. It is also involved in protein sorting to the basolateral membrane in epithelial cells and the proper asymmetric localization of somatodendritic proteins in neurons. AP-4 is involved in the recognition and binding of tyrosine-based sorting signals found in the cytoplasmic part of cargos, but may also recognize other types of sorting signal (Probable).</text>
</comment>
<comment type="subunit">
    <text evidence="1 2 3 8">Adaptor protein complex 4 (AP-4) is a heterotetramer composed of two large adaptins (epsilon-type subunit AP4E1 and beta-type subunit AP4B1), a medium adaptin (mu-type subunit AP4M1) and a small adaptin (sigma-type AP4S1) (PubMed:10066790, PubMed:10436028). Interacts with TEPSIN (PubMed:26542808). Interacts with GRIA2; probably indirect it mediates the somatodendritic localization of GRIA2 in neurons (By similarity).</text>
</comment>
<comment type="interaction">
    <interactant intactId="EBI-1222435">
        <id>Q9UPM8</id>
    </interactant>
    <interactant intactId="EBI-11139477">
        <id>Q96N21</id>
        <label>TEPSIN</label>
    </interactant>
    <organismsDiffer>false</organismsDiffer>
    <experiments>7</experiments>
</comment>
<comment type="subcellular location">
    <subcellularLocation>
        <location evidence="14">Golgi apparatus</location>
        <location evidence="14">trans-Golgi network membrane</location>
        <topology evidence="12">Peripheral membrane protein</topology>
    </subcellularLocation>
</comment>
<comment type="alternative products">
    <event type="alternative splicing"/>
    <isoform>
        <id>Q9UPM8-1</id>
        <name>1</name>
        <sequence type="displayed"/>
    </isoform>
    <isoform>
        <id>Q9UPM8-2</id>
        <name>2</name>
        <sequence type="described" ref="VSP_046009"/>
    </isoform>
</comment>
<comment type="tissue specificity">
    <text evidence="3">Widely expressed.</text>
</comment>
<comment type="disease" evidence="7">
    <disease id="DI-03061">
        <name>Spastic paraplegia 51, autosomal recessive</name>
        <acronym>SPG51</acronym>
        <description>A form of spastic paraplegia, a neurodegenerative disorder characterized by a slow, gradual, progressive weakness and spasticity of the lower limbs. SPG51 is a non-progressive disorder of movement and/or posture resulting from defects in the developing central nervous system. Affected individuals manifest motor and posture impairments often associated with epilepsy and disturbances of cognition, behavior, sensation, and communication.</description>
        <dbReference type="MIM" id="613744"/>
    </disease>
    <text>The disease is caused by variants affecting the gene represented in this entry.</text>
</comment>
<comment type="disease" evidence="9">
    <disease id="DI-04675">
        <name>Stuttering, familial persistent 1</name>
        <acronym>STUT1</acronym>
        <description>A familial form of stuttering, a disturbance in the normal fluency and time patterning of speech, characterized by frequent repetitions or prolongations of sounds or syllables, and by interruptions of speech known as blocks. STUT1 inheritance is autosomal dominant.</description>
        <dbReference type="MIM" id="184450"/>
    </disease>
    <text>The disease is caused by variants affecting the gene represented in this entry.</text>
</comment>
<comment type="similarity">
    <text evidence="12">Belongs to the adaptor complexes large subunit family.</text>
</comment>
<evidence type="ECO:0000250" key="1">
    <source>
        <dbReference type="UniProtKB" id="Q80V94"/>
    </source>
</evidence>
<evidence type="ECO:0000269" key="2">
    <source>
    </source>
</evidence>
<evidence type="ECO:0000269" key="3">
    <source>
    </source>
</evidence>
<evidence type="ECO:0000269" key="4">
    <source>
    </source>
</evidence>
<evidence type="ECO:0000269" key="5">
    <source>
    </source>
</evidence>
<evidence type="ECO:0000269" key="6">
    <source>
    </source>
</evidence>
<evidence type="ECO:0000269" key="7">
    <source>
    </source>
</evidence>
<evidence type="ECO:0000269" key="8">
    <source>
    </source>
</evidence>
<evidence type="ECO:0000269" key="9">
    <source>
    </source>
</evidence>
<evidence type="ECO:0000269" key="10">
    <source>
    </source>
</evidence>
<evidence type="ECO:0000303" key="11">
    <source>
    </source>
</evidence>
<evidence type="ECO:0000305" key="12"/>
<evidence type="ECO:0000305" key="13">
    <source>
    </source>
</evidence>
<evidence type="ECO:0000305" key="14">
    <source>
    </source>
</evidence>
<evidence type="ECO:0000312" key="15">
    <source>
        <dbReference type="HGNC" id="HGNC:573"/>
    </source>
</evidence>
<evidence type="ECO:0007744" key="16">
    <source>
    </source>
</evidence>
<evidence type="ECO:0007744" key="17">
    <source>
    </source>
</evidence>
<sequence>MSDIVEKTLTALPGLFLQNQPGGGPAAAKASFSSRLGSLVRGITALTSKHEEEKLIQQELSSLKATVSAPTTTLKMMKECMVRLIYCEMLGYDASFGYIHAIKLAQQGNLLEKRVGYLAVSLFLHESHELLLLLVNTVVKDLQSTNLVEVCMALTVVSQIFPCEMIPAVLPLIEDKLQHSKEIVRRKAVLALYKFHLIAPNQVQHIHIKFRKALCDRDVGVMAASLHIYLRMIKENSSGYKDLTGSFVTILKQVVGGKLPVEFNYHSVPAPWLQIQLLRILGLLGKDDQRTSELMYDVLDESLRRAELNHNVTYAILFECVHTVYSIYPKSELLEKAAKCIGKFVLSPKINLKYLGLKALTYVIQQDPTLALQHQMTIIECLDHPDPIIKRETLELLYRITNAQNITVIVQKMLEYLHQSKEEYVIVNLVGKIAELAEKYAPDNAWFIQTMNAVFSVGGDVMHPDIPNNFLRLLAEGFDDETEDQQLRLYAVQSYLTLLDMENVFYPQRFLQVMSWVLGEYSYLLDKETPEEVIAKLYKLLMNDSVSSETKAWLIAAVTKLTSQAHSSNTVERLIHEFTISLDTCMRQHAFELKHLHENVELMKSLLPVDRSCEDLVVDASLSFLDGFVAEGLSQGAAPYKPPHQRQEEKLSQEKVLNFEPYGLSFSSSGFTGRQSPAGISLGSDVSGNSAETGLKETNSLKLEGIKKLWGKEGYLPKKESKTGDESGALPVPQESIMENVDQAITKKDQSQVLTQSKEEKEKQLLASSLFVGLGSESTINLLGKADTVSHKFRRKSKVKEAKSGETTSTHNMTCSSFSSLSNVAYEDDYYSNTLHDTGDKELKKFSLTSELLDSESLTELPLVEKFSYCSLSTPSLFANNNMEIFHPPQSTAASVAKESSLASSFLEETTEYIHSNAMEVCNNETISVSSYKIWKDDCLLMVWSVTNKSGLELKSADLEIFPAENFKVTEQPGCCLPVMEAESTKSFQYSVQIEKPFTEGNLTGFISYHMMDTHSAQLEFSVNLSLLDFIRPLKISSDDFGKLWLSFANDVKQNVKMSESQAALPSALKTLQQKLRLHIIEIIGNEGLLACQLLPSIPCLLHCRVHADVLALWFRSSCSTLPDYLLYQCQKVMEGS</sequence>
<accession>Q9UPM8</accession>
<accession>A0AVD6</accession>
<accession>A1L4A9</accession>
<accession>A6NNX7</accession>
<accession>H0YKX4</accession>
<accession>Q68D31</accession>
<accession>Q9Y588</accession>
<name>AP4E1_HUMAN</name>
<keyword id="KW-0025">Alternative splicing</keyword>
<keyword id="KW-0333">Golgi apparatus</keyword>
<keyword id="KW-0890">Hereditary spastic paraplegia</keyword>
<keyword id="KW-0472">Membrane</keyword>
<keyword id="KW-0523">Neurodegeneration</keyword>
<keyword id="KW-0597">Phosphoprotein</keyword>
<keyword id="KW-0653">Protein transport</keyword>
<keyword id="KW-1267">Proteomics identification</keyword>
<keyword id="KW-1185">Reference proteome</keyword>
<keyword id="KW-0813">Transport</keyword>
<feature type="chain" id="PRO_0000193769" description="AP-4 complex subunit epsilon-1">
    <location>
        <begin position="1"/>
        <end position="1137"/>
    </location>
</feature>
<feature type="region of interest" description="Interaction with TEPSIN" evidence="8">
    <location>
        <begin position="727"/>
        <end position="1137"/>
    </location>
</feature>
<feature type="modified residue" description="Phosphoserine" evidence="17">
    <location>
        <position position="700"/>
    </location>
</feature>
<feature type="modified residue" description="Phosphoserine" evidence="16">
    <location>
        <position position="857"/>
    </location>
</feature>
<feature type="splice variant" id="VSP_046009" description="In isoform 2." evidence="11">
    <location>
        <begin position="1"/>
        <end position="75"/>
    </location>
</feature>
<feature type="sequence variant" id="VAR_076619" description="In dbSNP:rs147005786." evidence="9">
    <original>I</original>
    <variation>T</variation>
    <location>
        <position position="85"/>
    </location>
</feature>
<feature type="sequence variant" id="VAR_076620" description="In STUT1; uncertain significance; dbSNP:rs566579877." evidence="9">
    <original>F</original>
    <variation>V</variation>
    <location>
        <position position="96"/>
    </location>
</feature>
<feature type="sequence variant" id="VAR_076621" description="In dbSNP:rs200034177." evidence="9">
    <original>T</original>
    <variation>S</variation>
    <location>
        <position position="145"/>
    </location>
</feature>
<feature type="sequence variant" id="VAR_031621" description="In dbSNP:rs2306331." evidence="4 5 6">
    <original>C</original>
    <variation>R</variation>
    <location>
        <position position="163"/>
    </location>
</feature>
<feature type="sequence variant" id="VAR_076622" description="In STUT1; uncertain significance; dbSNP:rs148499164." evidence="9">
    <original>H</original>
    <variation>N</variation>
    <location>
        <position position="205"/>
    </location>
</feature>
<feature type="sequence variant" id="VAR_076623" description="In dbSNP:rs750328226." evidence="9">
    <original>R</original>
    <variation>Q</variation>
    <location>
        <position position="211"/>
    </location>
</feature>
<feature type="sequence variant" id="VAR_076624" description="In dbSNP:rs145541719." evidence="9">
    <original>N</original>
    <variation>S</variation>
    <location>
        <position position="264"/>
    </location>
</feature>
<feature type="sequence variant" id="VAR_076625" description="In STUT1; uncertain significance; dbSNP:rs536656846." evidence="9">
    <original>N</original>
    <variation>S</variation>
    <location>
        <position position="311"/>
    </location>
</feature>
<feature type="sequence variant" id="VAR_076626" description="In STUT1; uncertain significance; dbSNP:rs372479885." evidence="9">
    <original>S</original>
    <variation>F</variation>
    <location>
        <position position="326"/>
    </location>
</feature>
<feature type="sequence variant" id="VAR_076627" description="In STUT1; uncertain significance; dbSNP:rs866266998." evidence="9">
    <original>H</original>
    <variation>R</variation>
    <location>
        <position position="384"/>
    </location>
</feature>
<feature type="sequence variant" id="VAR_076628" description="In dbSNP:rs148817957." evidence="9">
    <original>I</original>
    <variation>L</variation>
    <location>
        <position position="426"/>
    </location>
</feature>
<feature type="sequence variant" id="VAR_076629" description="In STUT1; uncertain significance; dbSNP:rs200678853." evidence="9">
    <original>A</original>
    <variation>V</variation>
    <location>
        <position position="475"/>
    </location>
</feature>
<feature type="sequence variant" id="VAR_076630" description="In STUT1; slightly decreased assembly of the AP-4 complex; dbSNP:rs760021635." evidence="9">
    <original>V</original>
    <variation>I</variation>
    <location>
        <position position="517"/>
    </location>
</feature>
<feature type="sequence variant" id="VAR_076631" description="In STUT1; uncertain significance; dbSNP:rs542940704." evidence="9">
    <original>M</original>
    <variation>V</variation>
    <location>
        <position position="542"/>
    </location>
</feature>
<feature type="sequence variant" id="VAR_076632" description="In dbSNP:rs142215198." evidence="9">
    <original>V</original>
    <variation>I</variation>
    <location>
        <position position="618"/>
    </location>
</feature>
<feature type="sequence variant" id="VAR_076633" description="In STUT1; uncertain significance; dbSNP:rs766696884." evidence="9">
    <original>S</original>
    <variation>P</variation>
    <location>
        <position position="623"/>
    </location>
</feature>
<feature type="sequence variant" id="VAR_076634" description="In dbSNP:rs865868636." evidence="9">
    <original>I</original>
    <variation>K</variation>
    <location>
        <position position="706"/>
    </location>
</feature>
<feature type="sequence variant" id="VAR_079485" description="Found in deaf patients; uncertain significance." evidence="10">
    <original>K</original>
    <variation>E</variation>
    <location>
        <position position="719"/>
    </location>
</feature>
<feature type="sequence variant" id="VAR_076635" description="In STUT1; slightly decreased assembly of the AP-4 complex; dbSNP:rs556450190." evidence="9">
    <original>E</original>
    <variation>K</variation>
    <location>
        <position position="801"/>
    </location>
</feature>
<feature type="sequence variant" id="VAR_076636" description="In dbSNP:rs779094838." evidence="9">
    <original>M</original>
    <variation>V</variation>
    <location>
        <position position="813"/>
    </location>
</feature>
<feature type="sequence variant" id="VAR_076637" description="In STUT1; uncertain significance; dbSNP:rs780520338." evidence="9">
    <original>S</original>
    <variation>P</variation>
    <location>
        <position position="905"/>
    </location>
</feature>
<feature type="sequence variant" id="VAR_076638" description="In STUT1; uncertain significance; dbSNP:rs141278078." evidence="9">
    <original>P</original>
    <variation>S</variation>
    <location>
        <position position="978"/>
    </location>
</feature>
<feature type="sequence variant" id="VAR_076639" description="In STUT1; uncertain significance; dbSNP:rs767423538." evidence="9">
    <original>I</original>
    <variation>V</variation>
    <location>
        <position position="1080"/>
    </location>
</feature>
<feature type="sequence variant" id="VAR_076640" description="In STUT1; uncertain significance; dbSNP:rs550237440." evidence="9">
    <original>L</original>
    <variation>R</variation>
    <location>
        <position position="1089"/>
    </location>
</feature>
<feature type="sequence variant" id="VAR_076641" description="In STUT1; uncertain significance; dbSNP:rs139640763." evidence="9">
    <original>R</original>
    <variation>Q</variation>
    <location>
        <position position="1105"/>
    </location>
</feature>
<feature type="sequence conflict" description="In Ref. 1; AAD43326." evidence="12" ref="1">
    <original>A</original>
    <variation>G</variation>
    <location>
        <position position="30"/>
    </location>
</feature>
<feature type="sequence conflict" description="In Ref. 1; AAD43326." evidence="12" ref="1">
    <original>L</original>
    <variation>F</variation>
    <location>
        <position position="46"/>
    </location>
</feature>
<feature type="sequence conflict" description="In Ref. 1; AAD43326." evidence="12" ref="1">
    <original>L</original>
    <variation>P</variation>
    <location>
        <position position="214"/>
    </location>
</feature>
<feature type="sequence conflict" description="In Ref. 1; AAD43326." evidence="12" ref="1">
    <original>EFNY</original>
    <variation>NF</variation>
    <location>
        <begin position="262"/>
        <end position="265"/>
    </location>
</feature>
<feature type="sequence conflict" description="In Ref. 4; CAH18399." evidence="12" ref="4">
    <original>A</original>
    <variation>V</variation>
    <location>
        <position position="678"/>
    </location>
</feature>
<feature type="sequence conflict" description="In Ref. 4; CAH18399." evidence="12" ref="4">
    <original>R</original>
    <variation>G</variation>
    <location>
        <position position="794"/>
    </location>
</feature>
<feature type="sequence conflict" description="In Ref. 4; CAH18399." evidence="12" ref="4">
    <original>S</original>
    <variation>G</variation>
    <location>
        <position position="991"/>
    </location>
</feature>
<organism>
    <name type="scientific">Homo sapiens</name>
    <name type="common">Human</name>
    <dbReference type="NCBI Taxonomy" id="9606"/>
    <lineage>
        <taxon>Eukaryota</taxon>
        <taxon>Metazoa</taxon>
        <taxon>Chordata</taxon>
        <taxon>Craniata</taxon>
        <taxon>Vertebrata</taxon>
        <taxon>Euteleostomi</taxon>
        <taxon>Mammalia</taxon>
        <taxon>Eutheria</taxon>
        <taxon>Euarchontoglires</taxon>
        <taxon>Primates</taxon>
        <taxon>Haplorrhini</taxon>
        <taxon>Catarrhini</taxon>
        <taxon>Hominidae</taxon>
        <taxon>Homo</taxon>
    </lineage>
</organism>
<dbReference type="EMBL" id="AF155156">
    <property type="protein sequence ID" value="AAD43326.2"/>
    <property type="molecule type" value="mRNA"/>
</dbReference>
<dbReference type="EMBL" id="AB030653">
    <property type="protein sequence ID" value="BAA82969.1"/>
    <property type="molecule type" value="mRNA"/>
</dbReference>
<dbReference type="EMBL" id="CR749604">
    <property type="protein sequence ID" value="CAH18399.1"/>
    <property type="molecule type" value="mRNA"/>
</dbReference>
<dbReference type="EMBL" id="AC021752">
    <property type="status" value="NOT_ANNOTATED_CDS"/>
    <property type="molecule type" value="Genomic_DNA"/>
</dbReference>
<dbReference type="EMBL" id="AC022407">
    <property type="status" value="NOT_ANNOTATED_CDS"/>
    <property type="molecule type" value="Genomic_DNA"/>
</dbReference>
<dbReference type="EMBL" id="AC073964">
    <property type="status" value="NOT_ANNOTATED_CDS"/>
    <property type="molecule type" value="Genomic_DNA"/>
</dbReference>
<dbReference type="EMBL" id="CH471082">
    <property type="protein sequence ID" value="EAW77411.1"/>
    <property type="molecule type" value="Genomic_DNA"/>
</dbReference>
<dbReference type="EMBL" id="BC126308">
    <property type="protein sequence ID" value="AAI26309.1"/>
    <property type="molecule type" value="mRNA"/>
</dbReference>
<dbReference type="EMBL" id="BC130466">
    <property type="protein sequence ID" value="AAI30467.1"/>
    <property type="molecule type" value="mRNA"/>
</dbReference>
<dbReference type="CCDS" id="CCDS32240.1">
    <molecule id="Q9UPM8-1"/>
</dbReference>
<dbReference type="CCDS" id="CCDS58362.1">
    <molecule id="Q9UPM8-2"/>
</dbReference>
<dbReference type="RefSeq" id="NP_001239056.1">
    <molecule id="Q9UPM8-2"/>
    <property type="nucleotide sequence ID" value="NM_001252127.2"/>
</dbReference>
<dbReference type="RefSeq" id="NP_031373.2">
    <molecule id="Q9UPM8-1"/>
    <property type="nucleotide sequence ID" value="NM_007347.4"/>
</dbReference>
<dbReference type="RefSeq" id="XP_005254321.1">
    <molecule id="Q9UPM8-2"/>
    <property type="nucleotide sequence ID" value="XM_005254264.5"/>
</dbReference>
<dbReference type="RefSeq" id="XP_006720510.1">
    <molecule id="Q9UPM8-2"/>
    <property type="nucleotide sequence ID" value="XM_006720447.5"/>
</dbReference>
<dbReference type="RefSeq" id="XP_047288280.1">
    <molecule id="Q9UPM8-2"/>
    <property type="nucleotide sequence ID" value="XM_047432324.1"/>
</dbReference>
<dbReference type="RefSeq" id="XP_047288281.1">
    <molecule id="Q9UPM8-2"/>
    <property type="nucleotide sequence ID" value="XM_047432325.1"/>
</dbReference>
<dbReference type="RefSeq" id="XP_054233615.1">
    <molecule id="Q9UPM8-2"/>
    <property type="nucleotide sequence ID" value="XM_054377640.1"/>
</dbReference>
<dbReference type="RefSeq" id="XP_054233616.1">
    <molecule id="Q9UPM8-2"/>
    <property type="nucleotide sequence ID" value="XM_054377641.1"/>
</dbReference>
<dbReference type="RefSeq" id="XP_054233617.1">
    <molecule id="Q9UPM8-2"/>
    <property type="nucleotide sequence ID" value="XM_054377642.1"/>
</dbReference>
<dbReference type="RefSeq" id="XP_054233618.1">
    <molecule id="Q9UPM8-2"/>
    <property type="nucleotide sequence ID" value="XM_054377643.1"/>
</dbReference>
<dbReference type="SMR" id="Q9UPM8"/>
<dbReference type="BioGRID" id="116999">
    <property type="interactions" value="57"/>
</dbReference>
<dbReference type="ComplexPortal" id="CPX-5151">
    <property type="entry name" value="AP-4 Adaptor complex"/>
</dbReference>
<dbReference type="CORUM" id="Q9UPM8"/>
<dbReference type="FunCoup" id="Q9UPM8">
    <property type="interactions" value="2573"/>
</dbReference>
<dbReference type="IntAct" id="Q9UPM8">
    <property type="interactions" value="27"/>
</dbReference>
<dbReference type="STRING" id="9606.ENSP00000261842"/>
<dbReference type="TCDB" id="9.B.278.1.5">
    <property type="family name" value="the organellar-targeting adaptor protein complex (o-apc) family"/>
</dbReference>
<dbReference type="GlyGen" id="Q9UPM8">
    <property type="glycosylation" value="1 site"/>
</dbReference>
<dbReference type="iPTMnet" id="Q9UPM8"/>
<dbReference type="PhosphoSitePlus" id="Q9UPM8"/>
<dbReference type="BioMuta" id="AP4E1"/>
<dbReference type="DMDM" id="145559441"/>
<dbReference type="jPOST" id="Q9UPM8"/>
<dbReference type="MassIVE" id="Q9UPM8"/>
<dbReference type="PaxDb" id="9606-ENSP00000261842"/>
<dbReference type="PeptideAtlas" id="Q9UPM8"/>
<dbReference type="ProteomicsDB" id="39780"/>
<dbReference type="ProteomicsDB" id="85379">
    <molecule id="Q9UPM8-1"/>
</dbReference>
<dbReference type="Pumba" id="Q9UPM8"/>
<dbReference type="Antibodypedia" id="24780">
    <property type="antibodies" value="29 antibodies from 12 providers"/>
</dbReference>
<dbReference type="DNASU" id="23431"/>
<dbReference type="Ensembl" id="ENST00000261842.10">
    <molecule id="Q9UPM8-1"/>
    <property type="protein sequence ID" value="ENSP00000261842.5"/>
    <property type="gene ID" value="ENSG00000081014.11"/>
</dbReference>
<dbReference type="Ensembl" id="ENST00000560508.1">
    <molecule id="Q9UPM8-2"/>
    <property type="protein sequence ID" value="ENSP00000452976.1"/>
    <property type="gene ID" value="ENSG00000081014.11"/>
</dbReference>
<dbReference type="GeneID" id="23431"/>
<dbReference type="KEGG" id="hsa:23431"/>
<dbReference type="MANE-Select" id="ENST00000261842.10">
    <property type="protein sequence ID" value="ENSP00000261842.5"/>
    <property type="RefSeq nucleotide sequence ID" value="NM_007347.5"/>
    <property type="RefSeq protein sequence ID" value="NP_031373.2"/>
</dbReference>
<dbReference type="UCSC" id="uc001zyx.3">
    <molecule id="Q9UPM8-1"/>
    <property type="organism name" value="human"/>
</dbReference>
<dbReference type="AGR" id="HGNC:573"/>
<dbReference type="CTD" id="23431"/>
<dbReference type="DisGeNET" id="23431"/>
<dbReference type="GeneCards" id="AP4E1"/>
<dbReference type="GeneReviews" id="AP4E1"/>
<dbReference type="HGNC" id="HGNC:573">
    <property type="gene designation" value="AP4E1"/>
</dbReference>
<dbReference type="HPA" id="ENSG00000081014">
    <property type="expression patterns" value="Low tissue specificity"/>
</dbReference>
<dbReference type="MalaCards" id="AP4E1"/>
<dbReference type="MIM" id="184450">
    <property type="type" value="phenotype"/>
</dbReference>
<dbReference type="MIM" id="607244">
    <property type="type" value="gene"/>
</dbReference>
<dbReference type="MIM" id="613744">
    <property type="type" value="phenotype"/>
</dbReference>
<dbReference type="neXtProt" id="NX_Q9UPM8"/>
<dbReference type="OpenTargets" id="ENSG00000081014"/>
<dbReference type="Orphanet" id="280763">
    <property type="disease" value="Severe intellectual disability and progressive spastic paraplegia"/>
</dbReference>
<dbReference type="PharmGKB" id="PA24865"/>
<dbReference type="VEuPathDB" id="HostDB:ENSG00000081014"/>
<dbReference type="eggNOG" id="KOG1062">
    <property type="taxonomic scope" value="Eukaryota"/>
</dbReference>
<dbReference type="GeneTree" id="ENSGT00950000182838"/>
<dbReference type="HOGENOM" id="CLU_003824_3_1_1"/>
<dbReference type="InParanoid" id="Q9UPM8"/>
<dbReference type="OMA" id="ADNNMEI"/>
<dbReference type="OrthoDB" id="29308at2759"/>
<dbReference type="PAN-GO" id="Q9UPM8">
    <property type="GO annotations" value="3 GO annotations based on evolutionary models"/>
</dbReference>
<dbReference type="PhylomeDB" id="Q9UPM8"/>
<dbReference type="TreeFam" id="TF332488"/>
<dbReference type="PathwayCommons" id="Q9UPM8"/>
<dbReference type="Reactome" id="R-HSA-432720">
    <property type="pathway name" value="Lysosome Vesicle Biogenesis"/>
</dbReference>
<dbReference type="Reactome" id="R-HSA-432722">
    <property type="pathway name" value="Golgi Associated Vesicle Biogenesis"/>
</dbReference>
<dbReference type="SignaLink" id="Q9UPM8"/>
<dbReference type="BioGRID-ORCS" id="23431">
    <property type="hits" value="16 hits in 1165 CRISPR screens"/>
</dbReference>
<dbReference type="ChiTaRS" id="AP4E1">
    <property type="organism name" value="human"/>
</dbReference>
<dbReference type="GeneWiki" id="AP4E1"/>
<dbReference type="GenomeRNAi" id="23431"/>
<dbReference type="Pharos" id="Q9UPM8">
    <property type="development level" value="Tdark"/>
</dbReference>
<dbReference type="PRO" id="PR:Q9UPM8"/>
<dbReference type="Proteomes" id="UP000005640">
    <property type="component" value="Chromosome 15"/>
</dbReference>
<dbReference type="RNAct" id="Q9UPM8">
    <property type="molecule type" value="protein"/>
</dbReference>
<dbReference type="Bgee" id="ENSG00000081014">
    <property type="expression patterns" value="Expressed in gingival epithelium and 183 other cell types or tissues"/>
</dbReference>
<dbReference type="ExpressionAtlas" id="Q9UPM8">
    <property type="expression patterns" value="baseline and differential"/>
</dbReference>
<dbReference type="GO" id="GO:0030124">
    <property type="term" value="C:AP-4 adaptor complex"/>
    <property type="evidence" value="ECO:0000314"/>
    <property type="project" value="UniProtKB"/>
</dbReference>
<dbReference type="GO" id="GO:0031904">
    <property type="term" value="C:endosome lumen"/>
    <property type="evidence" value="ECO:0000304"/>
    <property type="project" value="Reactome"/>
</dbReference>
<dbReference type="GO" id="GO:0005802">
    <property type="term" value="C:trans-Golgi network"/>
    <property type="evidence" value="ECO:0000303"/>
    <property type="project" value="ComplexPortal"/>
</dbReference>
<dbReference type="GO" id="GO:0032588">
    <property type="term" value="C:trans-Golgi network membrane"/>
    <property type="evidence" value="ECO:0000304"/>
    <property type="project" value="Reactome"/>
</dbReference>
<dbReference type="GO" id="GO:0140312">
    <property type="term" value="F:cargo adaptor activity"/>
    <property type="evidence" value="ECO:0000318"/>
    <property type="project" value="GO_Central"/>
</dbReference>
<dbReference type="GO" id="GO:0006886">
    <property type="term" value="P:intracellular protein transport"/>
    <property type="evidence" value="ECO:0007669"/>
    <property type="project" value="InterPro"/>
</dbReference>
<dbReference type="GO" id="GO:0008104">
    <property type="term" value="P:protein localization"/>
    <property type="evidence" value="ECO:0000305"/>
    <property type="project" value="UniProtKB"/>
</dbReference>
<dbReference type="GO" id="GO:0006605">
    <property type="term" value="P:protein targeting"/>
    <property type="evidence" value="ECO:0000305"/>
    <property type="project" value="UniProtKB"/>
</dbReference>
<dbReference type="GO" id="GO:0016192">
    <property type="term" value="P:vesicle-mediated transport"/>
    <property type="evidence" value="ECO:0000303"/>
    <property type="project" value="ComplexPortal"/>
</dbReference>
<dbReference type="FunFam" id="1.25.10.10:FF:000227">
    <property type="entry name" value="AP-4 complex subunit epsilon"/>
    <property type="match status" value="1"/>
</dbReference>
<dbReference type="Gene3D" id="1.25.10.10">
    <property type="entry name" value="Leucine-rich Repeat Variant"/>
    <property type="match status" value="1"/>
</dbReference>
<dbReference type="InterPro" id="IPR050840">
    <property type="entry name" value="Adaptor_Complx_Large_Subunit"/>
</dbReference>
<dbReference type="InterPro" id="IPR017109">
    <property type="entry name" value="AP4_complex_esu"/>
</dbReference>
<dbReference type="InterPro" id="IPR028269">
    <property type="entry name" value="AP4E1_C"/>
</dbReference>
<dbReference type="InterPro" id="IPR011989">
    <property type="entry name" value="ARM-like"/>
</dbReference>
<dbReference type="InterPro" id="IPR016024">
    <property type="entry name" value="ARM-type_fold"/>
</dbReference>
<dbReference type="InterPro" id="IPR002553">
    <property type="entry name" value="Clathrin/coatomer_adapt-like_N"/>
</dbReference>
<dbReference type="PANTHER" id="PTHR22780">
    <property type="entry name" value="ADAPTIN, ALPHA/GAMMA/EPSILON"/>
    <property type="match status" value="1"/>
</dbReference>
<dbReference type="Pfam" id="PF01602">
    <property type="entry name" value="Adaptin_N"/>
    <property type="match status" value="1"/>
</dbReference>
<dbReference type="Pfam" id="PF14807">
    <property type="entry name" value="AP4E_app_platf"/>
    <property type="match status" value="1"/>
</dbReference>
<dbReference type="PIRSF" id="PIRSF037097">
    <property type="entry name" value="AP4_complex_epsilon"/>
    <property type="match status" value="1"/>
</dbReference>
<dbReference type="SMART" id="SM01356">
    <property type="entry name" value="AP4E_app_platf"/>
    <property type="match status" value="1"/>
</dbReference>
<dbReference type="SUPFAM" id="SSF48371">
    <property type="entry name" value="ARM repeat"/>
    <property type="match status" value="1"/>
</dbReference>
<reference key="1">
    <citation type="journal article" date="1999" name="Mol. Biol. Cell">
        <title>Characterization of a fourth adaptor-related protein complex.</title>
        <authorList>
            <person name="Hirst J."/>
            <person name="Bright N.A."/>
            <person name="Rous B."/>
            <person name="Robinson M.S."/>
        </authorList>
    </citation>
    <scope>NUCLEOTIDE SEQUENCE [MRNA] (ISOFORM 1)</scope>
    <scope>FUNCTION</scope>
    <scope>SUBUNIT</scope>
    <scope>SUBCELLULAR LOCATION</scope>
    <scope>TISSUE SPECIFICITY</scope>
    <source>
        <tissue>Heart</tissue>
        <tissue>Testis</tissue>
    </source>
</reference>
<reference key="2">
    <citation type="submission" date="2000-02" db="EMBL/GenBank/DDBJ databases">
        <authorList>
            <person name="Hirst J."/>
            <person name="Robinson M.S."/>
        </authorList>
    </citation>
    <scope>SEQUENCE REVISION</scope>
</reference>
<reference key="3">
    <citation type="journal article" date="2001" name="Biochem. Biophys. Res. Commun.">
        <title>Similar subunit interactions contribute to assembly of clathrin adaptor complexes and COPI complex: analysis using yeast three-hybrid system.</title>
        <authorList>
            <person name="Takatsu H."/>
            <person name="Futatsumori M."/>
            <person name="Yoshino K."/>
            <person name="Yoshida Y."/>
            <person name="Shin H.W."/>
            <person name="Nakayama K."/>
        </authorList>
    </citation>
    <scope>NUCLEOTIDE SEQUENCE [MRNA] (ISOFORM 1)</scope>
    <scope>VARIANT ARG-163</scope>
</reference>
<reference key="4">
    <citation type="journal article" date="2007" name="BMC Genomics">
        <title>The full-ORF clone resource of the German cDNA consortium.</title>
        <authorList>
            <person name="Bechtel S."/>
            <person name="Rosenfelder H."/>
            <person name="Duda A."/>
            <person name="Schmidt C.P."/>
            <person name="Ernst U."/>
            <person name="Wellenreuther R."/>
            <person name="Mehrle A."/>
            <person name="Schuster C."/>
            <person name="Bahr A."/>
            <person name="Bloecker H."/>
            <person name="Heubner D."/>
            <person name="Hoerlein A."/>
            <person name="Michel G."/>
            <person name="Wedler H."/>
            <person name="Koehrer K."/>
            <person name="Ottenwaelder B."/>
            <person name="Poustka A."/>
            <person name="Wiemann S."/>
            <person name="Schupp I."/>
        </authorList>
    </citation>
    <scope>NUCLEOTIDE SEQUENCE [LARGE SCALE MRNA] (ISOFORM 2)</scope>
    <scope>VARIANT ARG-163</scope>
    <source>
        <tissue>Uterine endothelium</tissue>
    </source>
</reference>
<reference key="5">
    <citation type="journal article" date="2006" name="Nature">
        <title>Analysis of the DNA sequence and duplication history of human chromosome 15.</title>
        <authorList>
            <person name="Zody M.C."/>
            <person name="Garber M."/>
            <person name="Sharpe T."/>
            <person name="Young S.K."/>
            <person name="Rowen L."/>
            <person name="O'Neill K."/>
            <person name="Whittaker C.A."/>
            <person name="Kamal M."/>
            <person name="Chang J.L."/>
            <person name="Cuomo C.A."/>
            <person name="Dewar K."/>
            <person name="FitzGerald M.G."/>
            <person name="Kodira C.D."/>
            <person name="Madan A."/>
            <person name="Qin S."/>
            <person name="Yang X."/>
            <person name="Abbasi N."/>
            <person name="Abouelleil A."/>
            <person name="Arachchi H.M."/>
            <person name="Baradarani L."/>
            <person name="Birditt B."/>
            <person name="Bloom S."/>
            <person name="Bloom T."/>
            <person name="Borowsky M.L."/>
            <person name="Burke J."/>
            <person name="Butler J."/>
            <person name="Cook A."/>
            <person name="DeArellano K."/>
            <person name="DeCaprio D."/>
            <person name="Dorris L. III"/>
            <person name="Dors M."/>
            <person name="Eichler E.E."/>
            <person name="Engels R."/>
            <person name="Fahey J."/>
            <person name="Fleetwood P."/>
            <person name="Friedman C."/>
            <person name="Gearin G."/>
            <person name="Hall J.L."/>
            <person name="Hensley G."/>
            <person name="Johnson E."/>
            <person name="Jones C."/>
            <person name="Kamat A."/>
            <person name="Kaur A."/>
            <person name="Locke D.P."/>
            <person name="Madan A."/>
            <person name="Munson G."/>
            <person name="Jaffe D.B."/>
            <person name="Lui A."/>
            <person name="Macdonald P."/>
            <person name="Mauceli E."/>
            <person name="Naylor J.W."/>
            <person name="Nesbitt R."/>
            <person name="Nicol R."/>
            <person name="O'Leary S.B."/>
            <person name="Ratcliffe A."/>
            <person name="Rounsley S."/>
            <person name="She X."/>
            <person name="Sneddon K.M.B."/>
            <person name="Stewart S."/>
            <person name="Sougnez C."/>
            <person name="Stone S.M."/>
            <person name="Topham K."/>
            <person name="Vincent D."/>
            <person name="Wang S."/>
            <person name="Zimmer A.R."/>
            <person name="Birren B.W."/>
            <person name="Hood L."/>
            <person name="Lander E.S."/>
            <person name="Nusbaum C."/>
        </authorList>
    </citation>
    <scope>NUCLEOTIDE SEQUENCE [LARGE SCALE GENOMIC DNA]</scope>
</reference>
<reference key="6">
    <citation type="submission" date="2005-07" db="EMBL/GenBank/DDBJ databases">
        <authorList>
            <person name="Mural R.J."/>
            <person name="Istrail S."/>
            <person name="Sutton G.G."/>
            <person name="Florea L."/>
            <person name="Halpern A.L."/>
            <person name="Mobarry C.M."/>
            <person name="Lippert R."/>
            <person name="Walenz B."/>
            <person name="Shatkay H."/>
            <person name="Dew I."/>
            <person name="Miller J.R."/>
            <person name="Flanigan M.J."/>
            <person name="Edwards N.J."/>
            <person name="Bolanos R."/>
            <person name="Fasulo D."/>
            <person name="Halldorsson B.V."/>
            <person name="Hannenhalli S."/>
            <person name="Turner R."/>
            <person name="Yooseph S."/>
            <person name="Lu F."/>
            <person name="Nusskern D.R."/>
            <person name="Shue B.C."/>
            <person name="Zheng X.H."/>
            <person name="Zhong F."/>
            <person name="Delcher A.L."/>
            <person name="Huson D.H."/>
            <person name="Kravitz S.A."/>
            <person name="Mouchard L."/>
            <person name="Reinert K."/>
            <person name="Remington K.A."/>
            <person name="Clark A.G."/>
            <person name="Waterman M.S."/>
            <person name="Eichler E.E."/>
            <person name="Adams M.D."/>
            <person name="Hunkapiller M.W."/>
            <person name="Myers E.W."/>
            <person name="Venter J.C."/>
        </authorList>
    </citation>
    <scope>NUCLEOTIDE SEQUENCE [LARGE SCALE GENOMIC DNA]</scope>
</reference>
<reference key="7">
    <citation type="journal article" date="2004" name="Genome Res.">
        <title>The status, quality, and expansion of the NIH full-length cDNA project: the Mammalian Gene Collection (MGC).</title>
        <authorList>
            <consortium name="The MGC Project Team"/>
        </authorList>
    </citation>
    <scope>NUCLEOTIDE SEQUENCE [LARGE SCALE MRNA] (ISOFORM 1)</scope>
    <scope>VARIANT ARG-163</scope>
</reference>
<reference key="8">
    <citation type="journal article" date="1999" name="J. Biol. Chem.">
        <title>AP-4, a novel protein complex related to clathrin adaptors.</title>
        <authorList>
            <person name="Dell'Angelica E.C."/>
            <person name="Mullins C."/>
            <person name="Bonifacino J.S."/>
        </authorList>
    </citation>
    <scope>FUNCTION</scope>
    <scope>SUBUNIT</scope>
</reference>
<reference key="9">
    <citation type="journal article" date="2008" name="Proc. Natl. Acad. Sci. U.S.A.">
        <title>A quantitative atlas of mitotic phosphorylation.</title>
        <authorList>
            <person name="Dephoure N."/>
            <person name="Zhou C."/>
            <person name="Villen J."/>
            <person name="Beausoleil S.A."/>
            <person name="Bakalarski C.E."/>
            <person name="Elledge S.J."/>
            <person name="Gygi S.P."/>
        </authorList>
    </citation>
    <scope>PHOSPHORYLATION [LARGE SCALE ANALYSIS] AT SER-857</scope>
    <scope>IDENTIFICATION BY MASS SPECTROMETRY [LARGE SCALE ANALYSIS]</scope>
    <source>
        <tissue>Cervix carcinoma</tissue>
    </source>
</reference>
<reference key="10">
    <citation type="journal article" date="2011" name="J. Med. Genet.">
        <title>Adaptor protein complex-4 (AP-4) deficiency causes a novel autosomal recessive cerebral palsy syndrome with microcephaly and intellectual disability.</title>
        <authorList>
            <person name="Moreno-De-Luca A."/>
            <person name="Helmers S.L."/>
            <person name="Mao H."/>
            <person name="Burns T.G."/>
            <person name="Melton A.M."/>
            <person name="Schmidt K.R."/>
            <person name="Fernhoff P.M."/>
            <person name="Ledbetter D.H."/>
            <person name="Martin C.L."/>
        </authorList>
    </citation>
    <scope>INVOLVEMENT IN SPG51</scope>
</reference>
<reference key="11">
    <citation type="journal article" date="2013" name="J. Proteome Res.">
        <title>Toward a comprehensive characterization of a human cancer cell phosphoproteome.</title>
        <authorList>
            <person name="Zhou H."/>
            <person name="Di Palma S."/>
            <person name="Preisinger C."/>
            <person name="Peng M."/>
            <person name="Polat A.N."/>
            <person name="Heck A.J."/>
            <person name="Mohammed S."/>
        </authorList>
    </citation>
    <scope>PHOSPHORYLATION [LARGE SCALE ANALYSIS] AT SER-700</scope>
    <scope>IDENTIFICATION BY MASS SPECTROMETRY [LARGE SCALE ANALYSIS]</scope>
    <source>
        <tissue>Cervix carcinoma</tissue>
    </source>
</reference>
<reference key="12">
    <citation type="journal article" date="2014" name="J. Proteomics">
        <title>An enzyme assisted RP-RPLC approach for in-depth analysis of human liver phosphoproteome.</title>
        <authorList>
            <person name="Bian Y."/>
            <person name="Song C."/>
            <person name="Cheng K."/>
            <person name="Dong M."/>
            <person name="Wang F."/>
            <person name="Huang J."/>
            <person name="Sun D."/>
            <person name="Wang L."/>
            <person name="Ye M."/>
            <person name="Zou H."/>
        </authorList>
    </citation>
    <scope>IDENTIFICATION BY MASS SPECTROMETRY [LARGE SCALE ANALYSIS]</scope>
    <source>
        <tissue>Liver</tissue>
    </source>
</reference>
<reference key="13">
    <citation type="journal article" date="2015" name="J. Biol. Chem.">
        <title>Bivalent motif-ear interactions mediate the association of the accessory protein tepsin with the AP-4 adaptor complex.</title>
        <authorList>
            <person name="Mattera R."/>
            <person name="Guardia C.M."/>
            <person name="Sidhu S.S."/>
            <person name="Bonifacino J.S."/>
        </authorList>
    </citation>
    <scope>INTERACTION WITH TEPSIN</scope>
    <scope>REGION</scope>
</reference>
<reference key="14">
    <citation type="journal article" date="2015" name="Am. J. Hum. Genet.">
        <title>Association between rare variants in AP4E1, a component of intracellular trafficking, and persistent stuttering.</title>
        <authorList>
            <person name="Raza M.H."/>
            <person name="Mattera R."/>
            <person name="Morell R."/>
            <person name="Sainz E."/>
            <person name="Rahn R."/>
            <person name="Gutierrez J."/>
            <person name="Paris E."/>
            <person name="Root J."/>
            <person name="Solomon B."/>
            <person name="Brewer C."/>
            <person name="Basra M.A."/>
            <person name="Khan S."/>
            <person name="Riazuddin S."/>
            <person name="Braun A."/>
            <person name="Bonifacino J.S."/>
            <person name="Drayna D."/>
        </authorList>
    </citation>
    <scope>INVOLVEMENT IN STUT1</scope>
    <scope>VARIANTS STUT1 VAL-96; ASN-205; SER-311; PHE-326; ARG-384; VAL-475; ILE-517; VAL-542; PRO-623; LYS-801; PRO-905; SER-978; VAL-1080; ARG-1089 AND GLN-1105</scope>
    <scope>VARIANTS THR-85; SER-145; GLN-211; SER-264; LEU-426; ILE-618; PRO-623; LYS-706 AND VAL-813</scope>
    <scope>CHARACTERIZATION OF VARIANTS STUT1 ILE-517 AND LYS-801</scope>
</reference>
<reference key="15">
    <citation type="journal article" date="2017" name="Genet. Med.">
        <title>A dominant variant in DMXL2 is linked to nonsyndromic hearing loss.</title>
        <authorList>
            <person name="Chen D.Y."/>
            <person name="Liu X.F."/>
            <person name="Lin X.J."/>
            <person name="Zhang D."/>
            <person name="Chai Y.C."/>
            <person name="Yu D.H."/>
            <person name="Sun C.L."/>
            <person name="Wang X.L."/>
            <person name="Zhu W.D."/>
            <person name="Chen Y."/>
            <person name="Sun L.H."/>
            <person name="Wang X.W."/>
            <person name="Shi F.X."/>
            <person name="Huang Z.W."/>
            <person name="Yang T."/>
            <person name="Wu H."/>
        </authorList>
    </citation>
    <scope>VARIANT GLU-719</scope>
</reference>
<proteinExistence type="evidence at protein level"/>
<gene>
    <name evidence="15" type="primary">AP4E1</name>
</gene>